<proteinExistence type="inferred from homology"/>
<sequence length="230" mass="24622">MKVGIIGAMEQEVALLRSQMNEPTTLQLGGCEFYQGKLAGKEVILTRSGIGKVAASVATSLLLEKFAPDCVINTGSAGGFAQDLHIGDMVIADEMRFHDVDVTAFGYEMGQMAQQPAAFPCDGKLIAVAQDCIAEQGKHQTKVGLICTGDQFMCKPDAIAKARADFPQMLAVEMEGAAIGQVCHMFKVPYLVVRAMSDIAGKEQVESFDAFIEVAGQHSAEMIIKMLGKL</sequence>
<feature type="chain" id="PRO_0000359270" description="5'-methylthioadenosine/S-adenosylhomocysteine nucleosidase">
    <location>
        <begin position="1"/>
        <end position="230"/>
    </location>
</feature>
<feature type="active site" description="Proton acceptor" evidence="1">
    <location>
        <position position="12"/>
    </location>
</feature>
<feature type="active site" description="Proton donor" evidence="1">
    <location>
        <position position="198"/>
    </location>
</feature>
<feature type="binding site" evidence="1">
    <location>
        <position position="78"/>
    </location>
    <ligand>
        <name>substrate</name>
    </ligand>
</feature>
<feature type="binding site" evidence="1">
    <location>
        <position position="153"/>
    </location>
    <ligand>
        <name>substrate</name>
    </ligand>
</feature>
<feature type="binding site" evidence="1">
    <location>
        <begin position="174"/>
        <end position="175"/>
    </location>
    <ligand>
        <name>substrate</name>
    </ligand>
</feature>
<dbReference type="EC" id="3.2.2.9" evidence="1"/>
<dbReference type="EMBL" id="CP000644">
    <property type="protein sequence ID" value="ABO90675.1"/>
    <property type="molecule type" value="Genomic_DNA"/>
</dbReference>
<dbReference type="RefSeq" id="WP_005310320.1">
    <property type="nucleotide sequence ID" value="NC_009348.1"/>
</dbReference>
<dbReference type="SMR" id="A4SP53"/>
<dbReference type="STRING" id="29491.GCA_000820065_00228"/>
<dbReference type="KEGG" id="asa:ASA_2653"/>
<dbReference type="PATRIC" id="fig|382245.13.peg.2622"/>
<dbReference type="eggNOG" id="COG0775">
    <property type="taxonomic scope" value="Bacteria"/>
</dbReference>
<dbReference type="HOGENOM" id="CLU_031248_2_2_6"/>
<dbReference type="UniPathway" id="UPA00904">
    <property type="reaction ID" value="UER00871"/>
</dbReference>
<dbReference type="Proteomes" id="UP000000225">
    <property type="component" value="Chromosome"/>
</dbReference>
<dbReference type="GO" id="GO:0005829">
    <property type="term" value="C:cytosol"/>
    <property type="evidence" value="ECO:0007669"/>
    <property type="project" value="TreeGrafter"/>
</dbReference>
<dbReference type="GO" id="GO:0008782">
    <property type="term" value="F:adenosylhomocysteine nucleosidase activity"/>
    <property type="evidence" value="ECO:0007669"/>
    <property type="project" value="UniProtKB-UniRule"/>
</dbReference>
<dbReference type="GO" id="GO:0008930">
    <property type="term" value="F:methylthioadenosine nucleosidase activity"/>
    <property type="evidence" value="ECO:0007669"/>
    <property type="project" value="UniProtKB-UniRule"/>
</dbReference>
<dbReference type="GO" id="GO:0019509">
    <property type="term" value="P:L-methionine salvage from methylthioadenosine"/>
    <property type="evidence" value="ECO:0007669"/>
    <property type="project" value="UniProtKB-UniRule"/>
</dbReference>
<dbReference type="GO" id="GO:0019284">
    <property type="term" value="P:L-methionine salvage from S-adenosylmethionine"/>
    <property type="evidence" value="ECO:0007669"/>
    <property type="project" value="TreeGrafter"/>
</dbReference>
<dbReference type="GO" id="GO:0009164">
    <property type="term" value="P:nucleoside catabolic process"/>
    <property type="evidence" value="ECO:0007669"/>
    <property type="project" value="InterPro"/>
</dbReference>
<dbReference type="CDD" id="cd09008">
    <property type="entry name" value="MTAN"/>
    <property type="match status" value="1"/>
</dbReference>
<dbReference type="FunFam" id="3.40.50.1580:FF:000001">
    <property type="entry name" value="MTA/SAH nucleosidase family protein"/>
    <property type="match status" value="1"/>
</dbReference>
<dbReference type="Gene3D" id="3.40.50.1580">
    <property type="entry name" value="Nucleoside phosphorylase domain"/>
    <property type="match status" value="1"/>
</dbReference>
<dbReference type="HAMAP" id="MF_01684">
    <property type="entry name" value="Salvage_MtnN"/>
    <property type="match status" value="1"/>
</dbReference>
<dbReference type="InterPro" id="IPR010049">
    <property type="entry name" value="MTA_SAH_Nsdase"/>
</dbReference>
<dbReference type="InterPro" id="IPR000845">
    <property type="entry name" value="Nucleoside_phosphorylase_d"/>
</dbReference>
<dbReference type="InterPro" id="IPR035994">
    <property type="entry name" value="Nucleoside_phosphorylase_sf"/>
</dbReference>
<dbReference type="NCBIfam" id="TIGR01704">
    <property type="entry name" value="MTA_SAH-Nsdase"/>
    <property type="match status" value="1"/>
</dbReference>
<dbReference type="NCBIfam" id="NF004079">
    <property type="entry name" value="PRK05584.1"/>
    <property type="match status" value="1"/>
</dbReference>
<dbReference type="PANTHER" id="PTHR46832">
    <property type="entry name" value="5'-METHYLTHIOADENOSINE/S-ADENOSYLHOMOCYSTEINE NUCLEOSIDASE"/>
    <property type="match status" value="1"/>
</dbReference>
<dbReference type="PANTHER" id="PTHR46832:SF1">
    <property type="entry name" value="5'-METHYLTHIOADENOSINE_S-ADENOSYLHOMOCYSTEINE NUCLEOSIDASE"/>
    <property type="match status" value="1"/>
</dbReference>
<dbReference type="Pfam" id="PF01048">
    <property type="entry name" value="PNP_UDP_1"/>
    <property type="match status" value="1"/>
</dbReference>
<dbReference type="SUPFAM" id="SSF53167">
    <property type="entry name" value="Purine and uridine phosphorylases"/>
    <property type="match status" value="1"/>
</dbReference>
<keyword id="KW-0028">Amino-acid biosynthesis</keyword>
<keyword id="KW-0378">Hydrolase</keyword>
<keyword id="KW-0486">Methionine biosynthesis</keyword>
<organism>
    <name type="scientific">Aeromonas salmonicida (strain A449)</name>
    <dbReference type="NCBI Taxonomy" id="382245"/>
    <lineage>
        <taxon>Bacteria</taxon>
        <taxon>Pseudomonadati</taxon>
        <taxon>Pseudomonadota</taxon>
        <taxon>Gammaproteobacteria</taxon>
        <taxon>Aeromonadales</taxon>
        <taxon>Aeromonadaceae</taxon>
        <taxon>Aeromonas</taxon>
    </lineage>
</organism>
<accession>A4SP53</accession>
<comment type="function">
    <text evidence="1">Catalyzes the irreversible cleavage of the glycosidic bond in both 5'-methylthioadenosine (MTA) and S-adenosylhomocysteine (SAH/AdoHcy) to adenine and the corresponding thioribose, 5'-methylthioribose and S-ribosylhomocysteine, respectively. Also cleaves 5'-deoxyadenosine, a toxic by-product of radical S-adenosylmethionine (SAM) enzymes, into 5-deoxyribose and adenine.</text>
</comment>
<comment type="catalytic activity">
    <reaction evidence="1">
        <text>S-adenosyl-L-homocysteine + H2O = S-(5-deoxy-D-ribos-5-yl)-L-homocysteine + adenine</text>
        <dbReference type="Rhea" id="RHEA:17805"/>
        <dbReference type="ChEBI" id="CHEBI:15377"/>
        <dbReference type="ChEBI" id="CHEBI:16708"/>
        <dbReference type="ChEBI" id="CHEBI:57856"/>
        <dbReference type="ChEBI" id="CHEBI:58195"/>
        <dbReference type="EC" id="3.2.2.9"/>
    </reaction>
</comment>
<comment type="catalytic activity">
    <reaction evidence="1">
        <text>S-methyl-5'-thioadenosine + H2O = 5-(methylsulfanyl)-D-ribose + adenine</text>
        <dbReference type="Rhea" id="RHEA:13617"/>
        <dbReference type="ChEBI" id="CHEBI:15377"/>
        <dbReference type="ChEBI" id="CHEBI:16708"/>
        <dbReference type="ChEBI" id="CHEBI:17509"/>
        <dbReference type="ChEBI" id="CHEBI:78440"/>
        <dbReference type="EC" id="3.2.2.9"/>
    </reaction>
</comment>
<comment type="catalytic activity">
    <reaction evidence="1">
        <text>5'-deoxyadenosine + H2O = 5-deoxy-D-ribose + adenine</text>
        <dbReference type="Rhea" id="RHEA:29859"/>
        <dbReference type="ChEBI" id="CHEBI:15377"/>
        <dbReference type="ChEBI" id="CHEBI:16708"/>
        <dbReference type="ChEBI" id="CHEBI:17319"/>
        <dbReference type="ChEBI" id="CHEBI:149540"/>
        <dbReference type="EC" id="3.2.2.9"/>
    </reaction>
    <physiologicalReaction direction="left-to-right" evidence="1">
        <dbReference type="Rhea" id="RHEA:29860"/>
    </physiologicalReaction>
</comment>
<comment type="pathway">
    <text evidence="1">Amino-acid biosynthesis; L-methionine biosynthesis via salvage pathway; S-methyl-5-thio-alpha-D-ribose 1-phosphate from S-methyl-5'-thioadenosine (hydrolase route): step 1/2.</text>
</comment>
<comment type="similarity">
    <text evidence="1">Belongs to the PNP/UDP phosphorylase family. MtnN subfamily.</text>
</comment>
<reference key="1">
    <citation type="journal article" date="2008" name="BMC Genomics">
        <title>The genome of Aeromonas salmonicida subsp. salmonicida A449: insights into the evolution of a fish pathogen.</title>
        <authorList>
            <person name="Reith M.E."/>
            <person name="Singh R.K."/>
            <person name="Curtis B."/>
            <person name="Boyd J.M."/>
            <person name="Bouevitch A."/>
            <person name="Kimball J."/>
            <person name="Munholland J."/>
            <person name="Murphy C."/>
            <person name="Sarty D."/>
            <person name="Williams J."/>
            <person name="Nash J.H."/>
            <person name="Johnson S.C."/>
            <person name="Brown L.L."/>
        </authorList>
    </citation>
    <scope>NUCLEOTIDE SEQUENCE [LARGE SCALE GENOMIC DNA]</scope>
    <source>
        <strain>A449</strain>
    </source>
</reference>
<evidence type="ECO:0000255" key="1">
    <source>
        <dbReference type="HAMAP-Rule" id="MF_01684"/>
    </source>
</evidence>
<name>MTNN_AERS4</name>
<gene>
    <name evidence="1" type="primary">mtnN</name>
    <name type="ordered locus">ASA_2653</name>
</gene>
<protein>
    <recommendedName>
        <fullName evidence="1">5'-methylthioadenosine/S-adenosylhomocysteine nucleosidase</fullName>
        <shortName evidence="1">MTA/SAH nucleosidase</shortName>
        <shortName evidence="1">MTAN</shortName>
        <ecNumber evidence="1">3.2.2.9</ecNumber>
    </recommendedName>
    <alternativeName>
        <fullName evidence="1">5'-deoxyadenosine nucleosidase</fullName>
        <shortName evidence="1">DOA nucleosidase</shortName>
        <shortName evidence="1">dAdo nucleosidase</shortName>
    </alternativeName>
    <alternativeName>
        <fullName evidence="1">5'-methylthioadenosine nucleosidase</fullName>
        <shortName evidence="1">MTA nucleosidase</shortName>
    </alternativeName>
    <alternativeName>
        <fullName evidence="1">S-adenosylhomocysteine nucleosidase</fullName>
        <shortName evidence="1">AdoHcy nucleosidase</shortName>
        <shortName evidence="1">SAH nucleosidase</shortName>
        <shortName evidence="1">SRH nucleosidase</shortName>
    </alternativeName>
</protein>